<proteinExistence type="evidence at protein level"/>
<reference key="1">
    <citation type="journal article" date="2003" name="Proc. Natl. Acad. Sci. U.S.A.">
        <title>Complete genome sequence of Lactobacillus plantarum WCFS1.</title>
        <authorList>
            <person name="Kleerebezem M."/>
            <person name="Boekhorst J."/>
            <person name="van Kranenburg R."/>
            <person name="Molenaar D."/>
            <person name="Kuipers O.P."/>
            <person name="Leer R."/>
            <person name="Tarchini R."/>
            <person name="Peters S.A."/>
            <person name="Sandbrink H.M."/>
            <person name="Fiers M.W.E.J."/>
            <person name="Stiekema W."/>
            <person name="Klein Lankhorst R.M."/>
            <person name="Bron P.A."/>
            <person name="Hoffer S.M."/>
            <person name="Nierop Groot M.N."/>
            <person name="Kerkhoven R."/>
            <person name="De Vries M."/>
            <person name="Ursing B."/>
            <person name="De Vos W.M."/>
            <person name="Siezen R.J."/>
        </authorList>
    </citation>
    <scope>NUCLEOTIDE SEQUENCE [LARGE SCALE GENOMIC DNA]</scope>
    <source>
        <strain>ATCC BAA-793 / NCIMB 8826 / WCFS1</strain>
    </source>
</reference>
<reference key="2">
    <citation type="journal article" date="2012" name="J. Bacteriol.">
        <title>Complete resequencing and reannotation of the Lactobacillus plantarum WCFS1 genome.</title>
        <authorList>
            <person name="Siezen R.J."/>
            <person name="Francke C."/>
            <person name="Renckens B."/>
            <person name="Boekhorst J."/>
            <person name="Wels M."/>
            <person name="Kleerebezem M."/>
            <person name="van Hijum S.A."/>
        </authorList>
    </citation>
    <scope>NUCLEOTIDE SEQUENCE [LARGE SCALE GENOMIC DNA]</scope>
    <scope>GENOME REANNOTATION</scope>
    <source>
        <strain>ATCC BAA-793 / NCIMB 8826 / WCFS1</strain>
    </source>
</reference>
<name>SYGB_LACPL</name>
<organism>
    <name type="scientific">Lactiplantibacillus plantarum (strain ATCC BAA-793 / NCIMB 8826 / WCFS1)</name>
    <name type="common">Lactobacillus plantarum</name>
    <dbReference type="NCBI Taxonomy" id="220668"/>
    <lineage>
        <taxon>Bacteria</taxon>
        <taxon>Bacillati</taxon>
        <taxon>Bacillota</taxon>
        <taxon>Bacilli</taxon>
        <taxon>Lactobacillales</taxon>
        <taxon>Lactobacillaceae</taxon>
        <taxon>Lactiplantibacillus</taxon>
    </lineage>
</organism>
<keyword id="KW-0002">3D-structure</keyword>
<keyword id="KW-0030">Aminoacyl-tRNA synthetase</keyword>
<keyword id="KW-0067">ATP-binding</keyword>
<keyword id="KW-0963">Cytoplasm</keyword>
<keyword id="KW-0436">Ligase</keyword>
<keyword id="KW-0547">Nucleotide-binding</keyword>
<keyword id="KW-0648">Protein biosynthesis</keyword>
<keyword id="KW-1185">Reference proteome</keyword>
<dbReference type="EC" id="6.1.1.14" evidence="1"/>
<dbReference type="EMBL" id="AL935263">
    <property type="protein sequence ID" value="CCC79218.1"/>
    <property type="molecule type" value="Genomic_DNA"/>
</dbReference>
<dbReference type="RefSeq" id="WP_011101608.1">
    <property type="nucleotide sequence ID" value="NC_004567.2"/>
</dbReference>
<dbReference type="RefSeq" id="YP_004889732.1">
    <property type="nucleotide sequence ID" value="NC_004567.2"/>
</dbReference>
<dbReference type="PDB" id="8IE2">
    <property type="method" value="X-ray"/>
    <property type="resolution" value="3.60 A"/>
    <property type="chains" value="E/F/G/H=1-694"/>
</dbReference>
<dbReference type="PDBsum" id="8IE2"/>
<dbReference type="SMR" id="Q88VS3"/>
<dbReference type="STRING" id="220668.lp_1964"/>
<dbReference type="EnsemblBacteria" id="CCC79218">
    <property type="protein sequence ID" value="CCC79218"/>
    <property type="gene ID" value="lp_1964"/>
</dbReference>
<dbReference type="KEGG" id="lpl:lp_1964"/>
<dbReference type="PATRIC" id="fig|220668.9.peg.1658"/>
<dbReference type="eggNOG" id="COG0751">
    <property type="taxonomic scope" value="Bacteria"/>
</dbReference>
<dbReference type="HOGENOM" id="CLU_007220_2_2_9"/>
<dbReference type="OrthoDB" id="9775440at2"/>
<dbReference type="PhylomeDB" id="Q88VS3"/>
<dbReference type="Proteomes" id="UP000000432">
    <property type="component" value="Chromosome"/>
</dbReference>
<dbReference type="GO" id="GO:0005829">
    <property type="term" value="C:cytosol"/>
    <property type="evidence" value="ECO:0007669"/>
    <property type="project" value="TreeGrafter"/>
</dbReference>
<dbReference type="GO" id="GO:0004814">
    <property type="term" value="F:arginine-tRNA ligase activity"/>
    <property type="evidence" value="ECO:0007669"/>
    <property type="project" value="InterPro"/>
</dbReference>
<dbReference type="GO" id="GO:0005524">
    <property type="term" value="F:ATP binding"/>
    <property type="evidence" value="ECO:0007669"/>
    <property type="project" value="UniProtKB-UniRule"/>
</dbReference>
<dbReference type="GO" id="GO:0004820">
    <property type="term" value="F:glycine-tRNA ligase activity"/>
    <property type="evidence" value="ECO:0007669"/>
    <property type="project" value="UniProtKB-UniRule"/>
</dbReference>
<dbReference type="GO" id="GO:0006420">
    <property type="term" value="P:arginyl-tRNA aminoacylation"/>
    <property type="evidence" value="ECO:0007669"/>
    <property type="project" value="InterPro"/>
</dbReference>
<dbReference type="GO" id="GO:0006426">
    <property type="term" value="P:glycyl-tRNA aminoacylation"/>
    <property type="evidence" value="ECO:0007669"/>
    <property type="project" value="UniProtKB-UniRule"/>
</dbReference>
<dbReference type="HAMAP" id="MF_00255">
    <property type="entry name" value="Gly_tRNA_synth_beta"/>
    <property type="match status" value="1"/>
</dbReference>
<dbReference type="InterPro" id="IPR008909">
    <property type="entry name" value="DALR_anticod-bd"/>
</dbReference>
<dbReference type="InterPro" id="IPR015944">
    <property type="entry name" value="Gly-tRNA-synth_bsu"/>
</dbReference>
<dbReference type="InterPro" id="IPR006194">
    <property type="entry name" value="Gly-tRNA-synth_heterodimer"/>
</dbReference>
<dbReference type="NCBIfam" id="TIGR00211">
    <property type="entry name" value="glyS"/>
    <property type="match status" value="1"/>
</dbReference>
<dbReference type="PANTHER" id="PTHR30075:SF2">
    <property type="entry name" value="GLYCINE--TRNA LIGASE, CHLOROPLASTIC_MITOCHONDRIAL 2"/>
    <property type="match status" value="1"/>
</dbReference>
<dbReference type="PANTHER" id="PTHR30075">
    <property type="entry name" value="GLYCYL-TRNA SYNTHETASE"/>
    <property type="match status" value="1"/>
</dbReference>
<dbReference type="Pfam" id="PF05746">
    <property type="entry name" value="DALR_1"/>
    <property type="match status" value="1"/>
</dbReference>
<dbReference type="Pfam" id="PF02092">
    <property type="entry name" value="tRNA_synt_2f"/>
    <property type="match status" value="1"/>
</dbReference>
<dbReference type="PRINTS" id="PR01045">
    <property type="entry name" value="TRNASYNTHGB"/>
</dbReference>
<dbReference type="SUPFAM" id="SSF109604">
    <property type="entry name" value="HD-domain/PDEase-like"/>
    <property type="match status" value="1"/>
</dbReference>
<dbReference type="PROSITE" id="PS50861">
    <property type="entry name" value="AA_TRNA_LIGASE_II_GLYAB"/>
    <property type="match status" value="1"/>
</dbReference>
<feature type="chain" id="PRO_0000072909" description="Glycine--tRNA ligase beta subunit">
    <location>
        <begin position="1"/>
        <end position="694"/>
    </location>
</feature>
<evidence type="ECO:0000255" key="1">
    <source>
        <dbReference type="HAMAP-Rule" id="MF_00255"/>
    </source>
</evidence>
<accession>Q88VS3</accession>
<accession>F9UPS9</accession>
<comment type="catalytic activity">
    <reaction evidence="1">
        <text>tRNA(Gly) + glycine + ATP = glycyl-tRNA(Gly) + AMP + diphosphate</text>
        <dbReference type="Rhea" id="RHEA:16013"/>
        <dbReference type="Rhea" id="RHEA-COMP:9664"/>
        <dbReference type="Rhea" id="RHEA-COMP:9683"/>
        <dbReference type="ChEBI" id="CHEBI:30616"/>
        <dbReference type="ChEBI" id="CHEBI:33019"/>
        <dbReference type="ChEBI" id="CHEBI:57305"/>
        <dbReference type="ChEBI" id="CHEBI:78442"/>
        <dbReference type="ChEBI" id="CHEBI:78522"/>
        <dbReference type="ChEBI" id="CHEBI:456215"/>
        <dbReference type="EC" id="6.1.1.14"/>
    </reaction>
</comment>
<comment type="subunit">
    <text evidence="1">Tetramer of two alpha and two beta subunits.</text>
</comment>
<comment type="subcellular location">
    <subcellularLocation>
        <location evidence="1">Cytoplasm</location>
    </subcellularLocation>
</comment>
<comment type="similarity">
    <text evidence="1">Belongs to the class-II aminoacyl-tRNA synthetase family.</text>
</comment>
<gene>
    <name evidence="1" type="primary">glyS</name>
    <name type="ordered locus">lp_1964</name>
</gene>
<sequence length="694" mass="78532">MAKTYLLEIGLEEMPAHVVTPSVLQLKERMIKFLKDARLDFEDVKTFSTPRRLTVQVLGLADKQADVKKEVRGPAKKIAQDADGNWTKAAIGFSKGQGASTDDIVFKDVKGTPYVFVQTFTAGKTAAEVLTGGIKDVITKMNFPTMMKWSTYSFKYIRPIRWIVSLLDDEVVPVQILDVAAGRVSRGHRFLGHDVEIATAADYEADLASVQVVADAAKRKATIREQIAALANERDWQIKVNEDLLEEVNNLVEYPTAFAGDFDTKYLTIPDEVLITSMRDHQRFFYVTDAEDNLLPHFVSVRNGNTDHLENVALGNQKVLTARLEDAAFFYHEDQQHSIQEYVERLKKVSFHDKIGTMYEKMQRVMIISDFLADRFGLTETEKNQLHRAAQIYKFDLVTGMVGEFPELQGVMGDKYAVLKGEDPAVGQAIREHYMPISADGDLPKSKVGAVLAIADKVDSITSFFAVGLTPSGSNDPFALRRQAFGIVRIVREQGWDFPIRQLEADIQKELVAHDATYNLDFEKQTAPVADFLTDRVKQWFNNRKIRYDIVDTVIKGSRQDIREMFKAADVLNAHQDDPQFKDTIEAFTRLLRITAKAKLAADDLTVDPSLFENEAEQHLYDAVLELQKQFTPAMSMEDRFKALAALRPLIVDYFEQTMVMSKDEKVRDNHLKQLLTIAQMINVMGDLNQLIVK</sequence>
<protein>
    <recommendedName>
        <fullName evidence="1">Glycine--tRNA ligase beta subunit</fullName>
        <ecNumber evidence="1">6.1.1.14</ecNumber>
    </recommendedName>
    <alternativeName>
        <fullName evidence="1">Glycyl-tRNA synthetase beta subunit</fullName>
        <shortName evidence="1">GlyRS</shortName>
    </alternativeName>
</protein>